<sequence>MARIAGINIPDHKHTVIALTSIFGIGKTRSQAICAATEIAENVKISELSEEQIDKLRDEVAKFVVEGDLRREVTLSIKRLMDLGTYRGLRHRRGLPVRGQRTKTNARTRKGPRKPIKK</sequence>
<accession>Q6CZZ2</accession>
<evidence type="ECO:0000255" key="1">
    <source>
        <dbReference type="HAMAP-Rule" id="MF_01315"/>
    </source>
</evidence>
<evidence type="ECO:0000256" key="2">
    <source>
        <dbReference type="SAM" id="MobiDB-lite"/>
    </source>
</evidence>
<evidence type="ECO:0000305" key="3"/>
<feature type="chain" id="PRO_0000230506" description="Small ribosomal subunit protein uS13">
    <location>
        <begin position="1"/>
        <end position="118"/>
    </location>
</feature>
<feature type="region of interest" description="Disordered" evidence="2">
    <location>
        <begin position="91"/>
        <end position="118"/>
    </location>
</feature>
<protein>
    <recommendedName>
        <fullName evidence="1">Small ribosomal subunit protein uS13</fullName>
    </recommendedName>
    <alternativeName>
        <fullName evidence="3">30S ribosomal protein S13</fullName>
    </alternativeName>
</protein>
<name>RS13_PECAS</name>
<dbReference type="EMBL" id="BX950851">
    <property type="protein sequence ID" value="CAG76906.1"/>
    <property type="molecule type" value="Genomic_DNA"/>
</dbReference>
<dbReference type="RefSeq" id="WP_011095499.1">
    <property type="nucleotide sequence ID" value="NC_004547.2"/>
</dbReference>
<dbReference type="SMR" id="Q6CZZ2"/>
<dbReference type="STRING" id="218491.ECA4009"/>
<dbReference type="GeneID" id="57210673"/>
<dbReference type="KEGG" id="eca:ECA4009"/>
<dbReference type="eggNOG" id="COG0099">
    <property type="taxonomic scope" value="Bacteria"/>
</dbReference>
<dbReference type="HOGENOM" id="CLU_103849_1_2_6"/>
<dbReference type="OrthoDB" id="9803610at2"/>
<dbReference type="Proteomes" id="UP000007966">
    <property type="component" value="Chromosome"/>
</dbReference>
<dbReference type="GO" id="GO:0005829">
    <property type="term" value="C:cytosol"/>
    <property type="evidence" value="ECO:0007669"/>
    <property type="project" value="TreeGrafter"/>
</dbReference>
<dbReference type="GO" id="GO:0015935">
    <property type="term" value="C:small ribosomal subunit"/>
    <property type="evidence" value="ECO:0007669"/>
    <property type="project" value="TreeGrafter"/>
</dbReference>
<dbReference type="GO" id="GO:0019843">
    <property type="term" value="F:rRNA binding"/>
    <property type="evidence" value="ECO:0007669"/>
    <property type="project" value="UniProtKB-UniRule"/>
</dbReference>
<dbReference type="GO" id="GO:0003735">
    <property type="term" value="F:structural constituent of ribosome"/>
    <property type="evidence" value="ECO:0007669"/>
    <property type="project" value="InterPro"/>
</dbReference>
<dbReference type="GO" id="GO:0000049">
    <property type="term" value="F:tRNA binding"/>
    <property type="evidence" value="ECO:0007669"/>
    <property type="project" value="UniProtKB-UniRule"/>
</dbReference>
<dbReference type="GO" id="GO:0006412">
    <property type="term" value="P:translation"/>
    <property type="evidence" value="ECO:0007669"/>
    <property type="project" value="UniProtKB-UniRule"/>
</dbReference>
<dbReference type="FunFam" id="1.10.8.50:FF:000001">
    <property type="entry name" value="30S ribosomal protein S13"/>
    <property type="match status" value="1"/>
</dbReference>
<dbReference type="FunFam" id="4.10.910.10:FF:000001">
    <property type="entry name" value="30S ribosomal protein S13"/>
    <property type="match status" value="1"/>
</dbReference>
<dbReference type="Gene3D" id="1.10.8.50">
    <property type="match status" value="1"/>
</dbReference>
<dbReference type="Gene3D" id="4.10.910.10">
    <property type="entry name" value="30s ribosomal protein s13, domain 2"/>
    <property type="match status" value="1"/>
</dbReference>
<dbReference type="HAMAP" id="MF_01315">
    <property type="entry name" value="Ribosomal_uS13"/>
    <property type="match status" value="1"/>
</dbReference>
<dbReference type="InterPro" id="IPR027437">
    <property type="entry name" value="Rbsml_uS13_C"/>
</dbReference>
<dbReference type="InterPro" id="IPR001892">
    <property type="entry name" value="Ribosomal_uS13"/>
</dbReference>
<dbReference type="InterPro" id="IPR010979">
    <property type="entry name" value="Ribosomal_uS13-like_H2TH"/>
</dbReference>
<dbReference type="InterPro" id="IPR019980">
    <property type="entry name" value="Ribosomal_uS13_bac-type"/>
</dbReference>
<dbReference type="InterPro" id="IPR018269">
    <property type="entry name" value="Ribosomal_uS13_CS"/>
</dbReference>
<dbReference type="NCBIfam" id="TIGR03631">
    <property type="entry name" value="uS13_bact"/>
    <property type="match status" value="1"/>
</dbReference>
<dbReference type="PANTHER" id="PTHR10871">
    <property type="entry name" value="30S RIBOSOMAL PROTEIN S13/40S RIBOSOMAL PROTEIN S18"/>
    <property type="match status" value="1"/>
</dbReference>
<dbReference type="PANTHER" id="PTHR10871:SF1">
    <property type="entry name" value="SMALL RIBOSOMAL SUBUNIT PROTEIN US13M"/>
    <property type="match status" value="1"/>
</dbReference>
<dbReference type="Pfam" id="PF00416">
    <property type="entry name" value="Ribosomal_S13"/>
    <property type="match status" value="1"/>
</dbReference>
<dbReference type="PIRSF" id="PIRSF002134">
    <property type="entry name" value="Ribosomal_S13"/>
    <property type="match status" value="1"/>
</dbReference>
<dbReference type="SUPFAM" id="SSF46946">
    <property type="entry name" value="S13-like H2TH domain"/>
    <property type="match status" value="1"/>
</dbReference>
<dbReference type="PROSITE" id="PS00646">
    <property type="entry name" value="RIBOSOMAL_S13_1"/>
    <property type="match status" value="1"/>
</dbReference>
<dbReference type="PROSITE" id="PS50159">
    <property type="entry name" value="RIBOSOMAL_S13_2"/>
    <property type="match status" value="1"/>
</dbReference>
<gene>
    <name evidence="1" type="primary">rpsM</name>
    <name type="ordered locus">ECA4009</name>
</gene>
<keyword id="KW-1185">Reference proteome</keyword>
<keyword id="KW-0687">Ribonucleoprotein</keyword>
<keyword id="KW-0689">Ribosomal protein</keyword>
<keyword id="KW-0694">RNA-binding</keyword>
<keyword id="KW-0699">rRNA-binding</keyword>
<keyword id="KW-0820">tRNA-binding</keyword>
<comment type="function">
    <text evidence="1">Located at the top of the head of the 30S subunit, it contacts several helices of the 16S rRNA. In the 70S ribosome it contacts the 23S rRNA (bridge B1a) and protein L5 of the 50S subunit (bridge B1b), connecting the 2 subunits; these bridges are implicated in subunit movement. Contacts the tRNAs in the A and P-sites.</text>
</comment>
<comment type="subunit">
    <text evidence="1">Part of the 30S ribosomal subunit. Forms a loose heterodimer with protein S19. Forms two bridges to the 50S subunit in the 70S ribosome.</text>
</comment>
<comment type="similarity">
    <text evidence="1">Belongs to the universal ribosomal protein uS13 family.</text>
</comment>
<proteinExistence type="inferred from homology"/>
<organism>
    <name type="scientific">Pectobacterium atrosepticum (strain SCRI 1043 / ATCC BAA-672)</name>
    <name type="common">Erwinia carotovora subsp. atroseptica</name>
    <dbReference type="NCBI Taxonomy" id="218491"/>
    <lineage>
        <taxon>Bacteria</taxon>
        <taxon>Pseudomonadati</taxon>
        <taxon>Pseudomonadota</taxon>
        <taxon>Gammaproteobacteria</taxon>
        <taxon>Enterobacterales</taxon>
        <taxon>Pectobacteriaceae</taxon>
        <taxon>Pectobacterium</taxon>
    </lineage>
</organism>
<reference key="1">
    <citation type="journal article" date="2004" name="Proc. Natl. Acad. Sci. U.S.A.">
        <title>Genome sequence of the enterobacterial phytopathogen Erwinia carotovora subsp. atroseptica and characterization of virulence factors.</title>
        <authorList>
            <person name="Bell K.S."/>
            <person name="Sebaihia M."/>
            <person name="Pritchard L."/>
            <person name="Holden M.T.G."/>
            <person name="Hyman L.J."/>
            <person name="Holeva M.C."/>
            <person name="Thomson N.R."/>
            <person name="Bentley S.D."/>
            <person name="Churcher L.J.C."/>
            <person name="Mungall K."/>
            <person name="Atkin R."/>
            <person name="Bason N."/>
            <person name="Brooks K."/>
            <person name="Chillingworth T."/>
            <person name="Clark K."/>
            <person name="Doggett J."/>
            <person name="Fraser A."/>
            <person name="Hance Z."/>
            <person name="Hauser H."/>
            <person name="Jagels K."/>
            <person name="Moule S."/>
            <person name="Norbertczak H."/>
            <person name="Ormond D."/>
            <person name="Price C."/>
            <person name="Quail M.A."/>
            <person name="Sanders M."/>
            <person name="Walker D."/>
            <person name="Whitehead S."/>
            <person name="Salmond G.P.C."/>
            <person name="Birch P.R.J."/>
            <person name="Parkhill J."/>
            <person name="Toth I.K."/>
        </authorList>
    </citation>
    <scope>NUCLEOTIDE SEQUENCE [LARGE SCALE GENOMIC DNA]</scope>
    <source>
        <strain>SCRI 1043 / ATCC BAA-672</strain>
    </source>
</reference>